<gene>
    <name evidence="1" type="primary">rihA</name>
    <name type="ordered locus">E2348C_0544</name>
</gene>
<dbReference type="EC" id="3.2.-.-" evidence="1"/>
<dbReference type="EMBL" id="FM180568">
    <property type="protein sequence ID" value="CAS08092.1"/>
    <property type="molecule type" value="Genomic_DNA"/>
</dbReference>
<dbReference type="RefSeq" id="WP_001207536.1">
    <property type="nucleotide sequence ID" value="NC_011601.1"/>
</dbReference>
<dbReference type="SMR" id="B7UKT4"/>
<dbReference type="KEGG" id="ecg:E2348C_0544"/>
<dbReference type="HOGENOM" id="CLU_036838_2_0_6"/>
<dbReference type="Proteomes" id="UP000008205">
    <property type="component" value="Chromosome"/>
</dbReference>
<dbReference type="GO" id="GO:0005829">
    <property type="term" value="C:cytosol"/>
    <property type="evidence" value="ECO:0007669"/>
    <property type="project" value="TreeGrafter"/>
</dbReference>
<dbReference type="GO" id="GO:0008477">
    <property type="term" value="F:purine nucleosidase activity"/>
    <property type="evidence" value="ECO:0007669"/>
    <property type="project" value="TreeGrafter"/>
</dbReference>
<dbReference type="GO" id="GO:0045437">
    <property type="term" value="F:uridine nucleosidase activity"/>
    <property type="evidence" value="ECO:0007669"/>
    <property type="project" value="InterPro"/>
</dbReference>
<dbReference type="GO" id="GO:0015949">
    <property type="term" value="P:nucleobase-containing small molecule interconversion"/>
    <property type="evidence" value="ECO:0007669"/>
    <property type="project" value="InterPro"/>
</dbReference>
<dbReference type="GO" id="GO:0006152">
    <property type="term" value="P:purine nucleoside catabolic process"/>
    <property type="evidence" value="ECO:0007669"/>
    <property type="project" value="TreeGrafter"/>
</dbReference>
<dbReference type="GO" id="GO:0006206">
    <property type="term" value="P:pyrimidine nucleobase metabolic process"/>
    <property type="evidence" value="ECO:0007669"/>
    <property type="project" value="UniProtKB-UniRule"/>
</dbReference>
<dbReference type="CDD" id="cd02651">
    <property type="entry name" value="nuc_hydro_IU_UC_XIUA"/>
    <property type="match status" value="1"/>
</dbReference>
<dbReference type="FunFam" id="3.90.245.10:FF:000001">
    <property type="entry name" value="Pyrimidine-specific ribonucleoside hydrolase RihA"/>
    <property type="match status" value="1"/>
</dbReference>
<dbReference type="Gene3D" id="3.90.245.10">
    <property type="entry name" value="Ribonucleoside hydrolase-like"/>
    <property type="match status" value="1"/>
</dbReference>
<dbReference type="HAMAP" id="MF_01431">
    <property type="entry name" value="Pyrim_hydro_RihA"/>
    <property type="match status" value="1"/>
</dbReference>
<dbReference type="InterPro" id="IPR015910">
    <property type="entry name" value="I/U_nuclsd_hydro_CS"/>
</dbReference>
<dbReference type="InterPro" id="IPR001910">
    <property type="entry name" value="Inosine/uridine_hydrolase_dom"/>
</dbReference>
<dbReference type="InterPro" id="IPR023186">
    <property type="entry name" value="IUNH"/>
</dbReference>
<dbReference type="InterPro" id="IPR022975">
    <property type="entry name" value="Pyrim_hydro_RihA"/>
</dbReference>
<dbReference type="InterPro" id="IPR036452">
    <property type="entry name" value="Ribo_hydro-like"/>
</dbReference>
<dbReference type="NCBIfam" id="NF007761">
    <property type="entry name" value="PRK10443.1"/>
    <property type="match status" value="1"/>
</dbReference>
<dbReference type="PANTHER" id="PTHR12304">
    <property type="entry name" value="INOSINE-URIDINE PREFERRING NUCLEOSIDE HYDROLASE"/>
    <property type="match status" value="1"/>
</dbReference>
<dbReference type="PANTHER" id="PTHR12304:SF4">
    <property type="entry name" value="URIDINE NUCLEOSIDASE"/>
    <property type="match status" value="1"/>
</dbReference>
<dbReference type="Pfam" id="PF01156">
    <property type="entry name" value="IU_nuc_hydro"/>
    <property type="match status" value="1"/>
</dbReference>
<dbReference type="SUPFAM" id="SSF53590">
    <property type="entry name" value="Nucleoside hydrolase"/>
    <property type="match status" value="1"/>
</dbReference>
<dbReference type="PROSITE" id="PS01247">
    <property type="entry name" value="IUNH"/>
    <property type="match status" value="1"/>
</dbReference>
<proteinExistence type="inferred from homology"/>
<name>RIHA_ECO27</name>
<protein>
    <recommendedName>
        <fullName evidence="1">Pyrimidine-specific ribonucleoside hydrolase RihA</fullName>
        <ecNumber evidence="1">3.2.-.-</ecNumber>
    </recommendedName>
    <alternativeName>
        <fullName evidence="1">Cytidine/uridine-specific hydrolase</fullName>
    </alternativeName>
</protein>
<keyword id="KW-0326">Glycosidase</keyword>
<keyword id="KW-0378">Hydrolase</keyword>
<keyword id="KW-1185">Reference proteome</keyword>
<sequence>MALPILLDCDPGHDDAIAIVLALASPELDVKAITSSAGNQTPEKTLRNVLRMLTLLNRTDIPVASGAVKPLMRNLIIADNVHGESGLDGPALPEPAFAPQNCTAVELMAKTLRESEEPVTIVSTGPQTNVALLLNSHPELHSKIARIVIMGGAMGLGNWTPAAEFNIYVDPEAAEIVFQSGIPVVMAGLDVTHKAQIHVEDTERFRAIGNPVSTIVAELLDFFLEYHKDEKWGFVGAPLHDPCTIAWLLKPELFTTVERWVGVETQGKYTQGMTVVDYYYLTGNKPNATVMVDVDRQGFVDLLADRLKFYA</sequence>
<reference key="1">
    <citation type="journal article" date="2009" name="J. Bacteriol.">
        <title>Complete genome sequence and comparative genome analysis of enteropathogenic Escherichia coli O127:H6 strain E2348/69.</title>
        <authorList>
            <person name="Iguchi A."/>
            <person name="Thomson N.R."/>
            <person name="Ogura Y."/>
            <person name="Saunders D."/>
            <person name="Ooka T."/>
            <person name="Henderson I.R."/>
            <person name="Harris D."/>
            <person name="Asadulghani M."/>
            <person name="Kurokawa K."/>
            <person name="Dean P."/>
            <person name="Kenny B."/>
            <person name="Quail M.A."/>
            <person name="Thurston S."/>
            <person name="Dougan G."/>
            <person name="Hayashi T."/>
            <person name="Parkhill J."/>
            <person name="Frankel G."/>
        </authorList>
    </citation>
    <scope>NUCLEOTIDE SEQUENCE [LARGE SCALE GENOMIC DNA]</scope>
    <source>
        <strain>E2348/69 / EPEC</strain>
    </source>
</reference>
<comment type="function">
    <text evidence="1">Hydrolyzes with equal efficiency cytidine or uridine to ribose and cytosine or uracil, respectively.</text>
</comment>
<comment type="similarity">
    <text evidence="1">Belongs to the IUNH family. RihA subfamily.</text>
</comment>
<organism>
    <name type="scientific">Escherichia coli O127:H6 (strain E2348/69 / EPEC)</name>
    <dbReference type="NCBI Taxonomy" id="574521"/>
    <lineage>
        <taxon>Bacteria</taxon>
        <taxon>Pseudomonadati</taxon>
        <taxon>Pseudomonadota</taxon>
        <taxon>Gammaproteobacteria</taxon>
        <taxon>Enterobacterales</taxon>
        <taxon>Enterobacteriaceae</taxon>
        <taxon>Escherichia</taxon>
    </lineage>
</organism>
<accession>B7UKT4</accession>
<evidence type="ECO:0000255" key="1">
    <source>
        <dbReference type="HAMAP-Rule" id="MF_01431"/>
    </source>
</evidence>
<feature type="chain" id="PRO_1000184892" description="Pyrimidine-specific ribonucleoside hydrolase RihA">
    <location>
        <begin position="1"/>
        <end position="311"/>
    </location>
</feature>
<feature type="active site" evidence="1">
    <location>
        <position position="240"/>
    </location>
</feature>